<sequence>MSMNSSTEISQEPSIMKPVSSISSFVFNAGFLQGTFSDTTLIIKGETYHLHALFLGRSPVLLQKLIENNPKGDVHYTIEVETEDPYVTKESCLFVLSTLYCDSPRIPAEVNVCSVLAVSDLLGLDTLAFEASSLIEKSIRPETMESVIRFLDPNFEGLERLKMGMYPRFTSGLFNKAIQVMYNTLVSNWNTEYARLLCNLPFEVIKDLLESDKLTVGASSMARYKLANEIVKMRASFRKQNHIEGKGDESVVLAFDEGSRGIQLVHIAPGAESRRKIWKATSVR</sequence>
<evidence type="ECO:0000255" key="1">
    <source>
        <dbReference type="PROSITE-ProRule" id="PRU00037"/>
    </source>
</evidence>
<evidence type="ECO:0000269" key="2">
    <source>
    </source>
</evidence>
<evidence type="ECO:0000269" key="3">
    <source>
    </source>
</evidence>
<accession>O74778</accession>
<reference key="1">
    <citation type="journal article" date="2002" name="Nature">
        <title>The genome sequence of Schizosaccharomyces pombe.</title>
        <authorList>
            <person name="Wood V."/>
            <person name="Gwilliam R."/>
            <person name="Rajandream M.A."/>
            <person name="Lyne M.H."/>
            <person name="Lyne R."/>
            <person name="Stewart A."/>
            <person name="Sgouros J.G."/>
            <person name="Peat N."/>
            <person name="Hayles J."/>
            <person name="Baker S.G."/>
            <person name="Basham D."/>
            <person name="Bowman S."/>
            <person name="Brooks K."/>
            <person name="Brown D."/>
            <person name="Brown S."/>
            <person name="Chillingworth T."/>
            <person name="Churcher C.M."/>
            <person name="Collins M."/>
            <person name="Connor R."/>
            <person name="Cronin A."/>
            <person name="Davis P."/>
            <person name="Feltwell T."/>
            <person name="Fraser A."/>
            <person name="Gentles S."/>
            <person name="Goble A."/>
            <person name="Hamlin N."/>
            <person name="Harris D.E."/>
            <person name="Hidalgo J."/>
            <person name="Hodgson G."/>
            <person name="Holroyd S."/>
            <person name="Hornsby T."/>
            <person name="Howarth S."/>
            <person name="Huckle E.J."/>
            <person name="Hunt S."/>
            <person name="Jagels K."/>
            <person name="James K.D."/>
            <person name="Jones L."/>
            <person name="Jones M."/>
            <person name="Leather S."/>
            <person name="McDonald S."/>
            <person name="McLean J."/>
            <person name="Mooney P."/>
            <person name="Moule S."/>
            <person name="Mungall K.L."/>
            <person name="Murphy L.D."/>
            <person name="Niblett D."/>
            <person name="Odell C."/>
            <person name="Oliver K."/>
            <person name="O'Neil S."/>
            <person name="Pearson D."/>
            <person name="Quail M.A."/>
            <person name="Rabbinowitsch E."/>
            <person name="Rutherford K.M."/>
            <person name="Rutter S."/>
            <person name="Saunders D."/>
            <person name="Seeger K."/>
            <person name="Sharp S."/>
            <person name="Skelton J."/>
            <person name="Simmonds M.N."/>
            <person name="Squares R."/>
            <person name="Squares S."/>
            <person name="Stevens K."/>
            <person name="Taylor K."/>
            <person name="Taylor R.G."/>
            <person name="Tivey A."/>
            <person name="Walsh S.V."/>
            <person name="Warren T."/>
            <person name="Whitehead S."/>
            <person name="Woodward J.R."/>
            <person name="Volckaert G."/>
            <person name="Aert R."/>
            <person name="Robben J."/>
            <person name="Grymonprez B."/>
            <person name="Weltjens I."/>
            <person name="Vanstreels E."/>
            <person name="Rieger M."/>
            <person name="Schaefer M."/>
            <person name="Mueller-Auer S."/>
            <person name="Gabel C."/>
            <person name="Fuchs M."/>
            <person name="Duesterhoeft A."/>
            <person name="Fritzc C."/>
            <person name="Holzer E."/>
            <person name="Moestl D."/>
            <person name="Hilbert H."/>
            <person name="Borzym K."/>
            <person name="Langer I."/>
            <person name="Beck A."/>
            <person name="Lehrach H."/>
            <person name="Reinhardt R."/>
            <person name="Pohl T.M."/>
            <person name="Eger P."/>
            <person name="Zimmermann W."/>
            <person name="Wedler H."/>
            <person name="Wambutt R."/>
            <person name="Purnelle B."/>
            <person name="Goffeau A."/>
            <person name="Cadieu E."/>
            <person name="Dreano S."/>
            <person name="Gloux S."/>
            <person name="Lelaure V."/>
            <person name="Mottier S."/>
            <person name="Galibert F."/>
            <person name="Aves S.J."/>
            <person name="Xiang Z."/>
            <person name="Hunt C."/>
            <person name="Moore K."/>
            <person name="Hurst S.M."/>
            <person name="Lucas M."/>
            <person name="Rochet M."/>
            <person name="Gaillardin C."/>
            <person name="Tallada V.A."/>
            <person name="Garzon A."/>
            <person name="Thode G."/>
            <person name="Daga R.R."/>
            <person name="Cruzado L."/>
            <person name="Jimenez J."/>
            <person name="Sanchez M."/>
            <person name="del Rey F."/>
            <person name="Benito J."/>
            <person name="Dominguez A."/>
            <person name="Revuelta J.L."/>
            <person name="Moreno S."/>
            <person name="Armstrong J."/>
            <person name="Forsburg S.L."/>
            <person name="Cerutti L."/>
            <person name="Lowe T."/>
            <person name="McCombie W.R."/>
            <person name="Paulsen I."/>
            <person name="Potashkin J."/>
            <person name="Shpakovski G.V."/>
            <person name="Ussery D."/>
            <person name="Barrell B.G."/>
            <person name="Nurse P."/>
        </authorList>
    </citation>
    <scope>NUCLEOTIDE SEQUENCE [LARGE SCALE GENOMIC DNA]</scope>
    <source>
        <strain>972 / ATCC 24843</strain>
    </source>
</reference>
<reference key="2">
    <citation type="journal article" date="2003" name="Mol. Cell">
        <title>BTB/POZ domain proteins are putative substrate adaptors for cullin 3 ubiquitin ligases.</title>
        <authorList>
            <person name="Geyer R."/>
            <person name="Wee S."/>
            <person name="Anderson S."/>
            <person name="Yates J. III"/>
            <person name="Wolf D.A."/>
        </authorList>
    </citation>
    <scope>INTERACTION WITH CUL3</scope>
</reference>
<reference key="3">
    <citation type="journal article" date="2006" name="Nat. Biotechnol.">
        <title>ORFeome cloning and global analysis of protein localization in the fission yeast Schizosaccharomyces pombe.</title>
        <authorList>
            <person name="Matsuyama A."/>
            <person name="Arai R."/>
            <person name="Yashiroda Y."/>
            <person name="Shirai A."/>
            <person name="Kamata A."/>
            <person name="Sekido S."/>
            <person name="Kobayashi Y."/>
            <person name="Hashimoto A."/>
            <person name="Hamamoto M."/>
            <person name="Hiraoka Y."/>
            <person name="Horinouchi S."/>
            <person name="Yoshida M."/>
        </authorList>
    </citation>
    <scope>SUBCELLULAR LOCATION [LARGE SCALE ANALYSIS]</scope>
</reference>
<protein>
    <recommendedName>
        <fullName>BTB/POZ domain-containing protein 2</fullName>
    </recommendedName>
</protein>
<dbReference type="EMBL" id="CU329671">
    <property type="protein sequence ID" value="CAA21264.1"/>
    <property type="molecule type" value="Genomic_DNA"/>
</dbReference>
<dbReference type="PIR" id="T39982">
    <property type="entry name" value="T39982"/>
</dbReference>
<dbReference type="RefSeq" id="NP_596074.1">
    <property type="nucleotide sequence ID" value="NM_001021986.2"/>
</dbReference>
<dbReference type="SMR" id="O74778"/>
<dbReference type="BioGRID" id="277073">
    <property type="interactions" value="16"/>
</dbReference>
<dbReference type="FunCoup" id="O74778">
    <property type="interactions" value="2"/>
</dbReference>
<dbReference type="IntAct" id="O74778">
    <property type="interactions" value="2"/>
</dbReference>
<dbReference type="STRING" id="284812.O74778"/>
<dbReference type="PaxDb" id="4896-SPBC25B2.06c.1"/>
<dbReference type="EnsemblFungi" id="SPBC25B2.06c.1">
    <property type="protein sequence ID" value="SPBC25B2.06c.1:pep"/>
    <property type="gene ID" value="SPBC25B2.06c"/>
</dbReference>
<dbReference type="GeneID" id="2540546"/>
<dbReference type="KEGG" id="spo:2540546"/>
<dbReference type="PomBase" id="SPBC25B2.06c">
    <property type="gene designation" value="btb2"/>
</dbReference>
<dbReference type="VEuPathDB" id="FungiDB:SPBC25B2.06c"/>
<dbReference type="eggNOG" id="ENOG502QUCE">
    <property type="taxonomic scope" value="Eukaryota"/>
</dbReference>
<dbReference type="HOGENOM" id="CLU_1019987_0_0_1"/>
<dbReference type="InParanoid" id="O74778"/>
<dbReference type="OMA" id="GFQTGNY"/>
<dbReference type="PhylomeDB" id="O74778"/>
<dbReference type="UniPathway" id="UPA00143"/>
<dbReference type="PRO" id="PR:O74778"/>
<dbReference type="Proteomes" id="UP000002485">
    <property type="component" value="Chromosome II"/>
</dbReference>
<dbReference type="GO" id="GO:0005829">
    <property type="term" value="C:cytosol"/>
    <property type="evidence" value="ECO:0007005"/>
    <property type="project" value="PomBase"/>
</dbReference>
<dbReference type="GO" id="GO:0005634">
    <property type="term" value="C:nucleus"/>
    <property type="evidence" value="ECO:0007005"/>
    <property type="project" value="PomBase"/>
</dbReference>
<dbReference type="GO" id="GO:0000151">
    <property type="term" value="C:ubiquitin ligase complex"/>
    <property type="evidence" value="ECO:0000353"/>
    <property type="project" value="PomBase"/>
</dbReference>
<dbReference type="GO" id="GO:1990756">
    <property type="term" value="F:ubiquitin-like ligase-substrate adaptor activity"/>
    <property type="evidence" value="ECO:0000255"/>
    <property type="project" value="PomBase"/>
</dbReference>
<dbReference type="GO" id="GO:0016567">
    <property type="term" value="P:protein ubiquitination"/>
    <property type="evidence" value="ECO:0007669"/>
    <property type="project" value="UniProtKB-UniPathway"/>
</dbReference>
<dbReference type="Gene3D" id="3.30.710.10">
    <property type="entry name" value="Potassium Channel Kv1.1, Chain A"/>
    <property type="match status" value="1"/>
</dbReference>
<dbReference type="InterPro" id="IPR000210">
    <property type="entry name" value="BTB/POZ_dom"/>
</dbReference>
<dbReference type="InterPro" id="IPR011333">
    <property type="entry name" value="SKP1/BTB/POZ_sf"/>
</dbReference>
<dbReference type="PANTHER" id="PTHR47369">
    <property type="entry name" value="BTB/POZ DOMAIN-CONTAINING PROTEIN"/>
    <property type="match status" value="1"/>
</dbReference>
<dbReference type="PANTHER" id="PTHR47369:SF2">
    <property type="entry name" value="BTB_POZ DOMAIN-CONTAINING PROTEIN 2"/>
    <property type="match status" value="1"/>
</dbReference>
<dbReference type="Pfam" id="PF00651">
    <property type="entry name" value="BTB"/>
    <property type="match status" value="1"/>
</dbReference>
<dbReference type="SMART" id="SM00225">
    <property type="entry name" value="BTB"/>
    <property type="match status" value="1"/>
</dbReference>
<dbReference type="SUPFAM" id="SSF54695">
    <property type="entry name" value="POZ domain"/>
    <property type="match status" value="1"/>
</dbReference>
<dbReference type="PROSITE" id="PS50097">
    <property type="entry name" value="BTB"/>
    <property type="match status" value="1"/>
</dbReference>
<feature type="chain" id="PRO_0000278358" description="BTB/POZ domain-containing protein 2">
    <location>
        <begin position="1"/>
        <end position="284"/>
    </location>
</feature>
<feature type="domain" description="BTB" evidence="1">
    <location>
        <begin position="37"/>
        <end position="108"/>
    </location>
</feature>
<proteinExistence type="evidence at protein level"/>
<keyword id="KW-0963">Cytoplasm</keyword>
<keyword id="KW-0539">Nucleus</keyword>
<keyword id="KW-1185">Reference proteome</keyword>
<keyword id="KW-0833">Ubl conjugation pathway</keyword>
<organism>
    <name type="scientific">Schizosaccharomyces pombe (strain 972 / ATCC 24843)</name>
    <name type="common">Fission yeast</name>
    <dbReference type="NCBI Taxonomy" id="284812"/>
    <lineage>
        <taxon>Eukaryota</taxon>
        <taxon>Fungi</taxon>
        <taxon>Dikarya</taxon>
        <taxon>Ascomycota</taxon>
        <taxon>Taphrinomycotina</taxon>
        <taxon>Schizosaccharomycetes</taxon>
        <taxon>Schizosaccharomycetales</taxon>
        <taxon>Schizosaccharomycetaceae</taxon>
        <taxon>Schizosaccharomyces</taxon>
    </lineage>
</organism>
<gene>
    <name type="primary">btb2</name>
    <name type="ORF">SPBC25B2.06c</name>
</gene>
<comment type="function">
    <text>Probable substrate-specific adapter of an E3 ubiquitin-protein ligase complex which mediates the ubiquitination and subsequent proteasomal degradation of target proteins.</text>
</comment>
<comment type="pathway">
    <text>Protein modification; protein ubiquitination.</text>
</comment>
<comment type="subunit">
    <text evidence="2">Interacts with cul3.</text>
</comment>
<comment type="interaction">
    <interactant intactId="EBI-3648173">
        <id>O74778</id>
    </interactant>
    <interactant intactId="EBI-3647930">
        <id>Q09760</id>
        <label>cul3</label>
    </interactant>
    <organismsDiffer>false</organismsDiffer>
    <experiments>2</experiments>
</comment>
<comment type="subcellular location">
    <subcellularLocation>
        <location evidence="3">Cytoplasm</location>
    </subcellularLocation>
    <subcellularLocation>
        <location evidence="3">Nucleus</location>
    </subcellularLocation>
</comment>
<name>BTB2_SCHPO</name>